<name>RL5_MARSD</name>
<comment type="function">
    <text evidence="1">This is one of the proteins that bind and probably mediate the attachment of the 5S RNA into the large ribosomal subunit, where it forms part of the central protuberance. In the 70S ribosome it contacts protein S13 of the 30S subunit (bridge B1b), connecting the 2 subunits; this bridge is implicated in subunit movement. Contacts the P site tRNA; the 5S rRNA and some of its associated proteins might help stabilize positioning of ribosome-bound tRNAs.</text>
</comment>
<comment type="subunit">
    <text evidence="1">Part of the 50S ribosomal subunit; part of the 5S rRNA/L5/L18/L25 subcomplex. Contacts the 5S rRNA and the P site tRNA. Forms a bridge to the 30S subunit in the 70S ribosome.</text>
</comment>
<comment type="similarity">
    <text evidence="1">Belongs to the universal ribosomal protein uL5 family.</text>
</comment>
<sequence length="179" mass="19831">MTRLEKIYTDKVAPALNKEFGYKSSMEIPGIKAISLNIGLGEASQNAKLIDGAVEELTAIAGQRAVVTRAKKSIAAFKLREGMPVGSRVTLRRDLMWDFLDKLISFALPRVRDFRGIPDKGFDGRGNFTLGIKELTIFPEIQLDKIEITKGMNVTIVTSAKTDKEGKMLLELLGMPFKK</sequence>
<dbReference type="EMBL" id="CP001649">
    <property type="protein sequence ID" value="ACS79260.1"/>
    <property type="molecule type" value="Genomic_DNA"/>
</dbReference>
<dbReference type="RefSeq" id="WP_015851079.1">
    <property type="nucleotide sequence ID" value="NC_012881.1"/>
</dbReference>
<dbReference type="SMR" id="C6C197"/>
<dbReference type="STRING" id="526222.Desal_1197"/>
<dbReference type="KEGG" id="dsa:Desal_1197"/>
<dbReference type="eggNOG" id="COG0094">
    <property type="taxonomic scope" value="Bacteria"/>
</dbReference>
<dbReference type="HOGENOM" id="CLU_061015_2_1_7"/>
<dbReference type="OrthoDB" id="9806626at2"/>
<dbReference type="Proteomes" id="UP000002601">
    <property type="component" value="Chromosome"/>
</dbReference>
<dbReference type="GO" id="GO:1990904">
    <property type="term" value="C:ribonucleoprotein complex"/>
    <property type="evidence" value="ECO:0007669"/>
    <property type="project" value="UniProtKB-KW"/>
</dbReference>
<dbReference type="GO" id="GO:0005840">
    <property type="term" value="C:ribosome"/>
    <property type="evidence" value="ECO:0007669"/>
    <property type="project" value="UniProtKB-KW"/>
</dbReference>
<dbReference type="GO" id="GO:0019843">
    <property type="term" value="F:rRNA binding"/>
    <property type="evidence" value="ECO:0007669"/>
    <property type="project" value="UniProtKB-UniRule"/>
</dbReference>
<dbReference type="GO" id="GO:0003735">
    <property type="term" value="F:structural constituent of ribosome"/>
    <property type="evidence" value="ECO:0007669"/>
    <property type="project" value="InterPro"/>
</dbReference>
<dbReference type="GO" id="GO:0000049">
    <property type="term" value="F:tRNA binding"/>
    <property type="evidence" value="ECO:0007669"/>
    <property type="project" value="UniProtKB-UniRule"/>
</dbReference>
<dbReference type="GO" id="GO:0006412">
    <property type="term" value="P:translation"/>
    <property type="evidence" value="ECO:0007669"/>
    <property type="project" value="UniProtKB-UniRule"/>
</dbReference>
<dbReference type="FunFam" id="3.30.1440.10:FF:000001">
    <property type="entry name" value="50S ribosomal protein L5"/>
    <property type="match status" value="1"/>
</dbReference>
<dbReference type="Gene3D" id="3.30.1440.10">
    <property type="match status" value="1"/>
</dbReference>
<dbReference type="HAMAP" id="MF_01333_B">
    <property type="entry name" value="Ribosomal_uL5_B"/>
    <property type="match status" value="1"/>
</dbReference>
<dbReference type="InterPro" id="IPR002132">
    <property type="entry name" value="Ribosomal_uL5"/>
</dbReference>
<dbReference type="InterPro" id="IPR020930">
    <property type="entry name" value="Ribosomal_uL5_bac-type"/>
</dbReference>
<dbReference type="InterPro" id="IPR031309">
    <property type="entry name" value="Ribosomal_uL5_C"/>
</dbReference>
<dbReference type="InterPro" id="IPR020929">
    <property type="entry name" value="Ribosomal_uL5_CS"/>
</dbReference>
<dbReference type="InterPro" id="IPR022803">
    <property type="entry name" value="Ribosomal_uL5_dom_sf"/>
</dbReference>
<dbReference type="InterPro" id="IPR031310">
    <property type="entry name" value="Ribosomal_uL5_N"/>
</dbReference>
<dbReference type="NCBIfam" id="NF000585">
    <property type="entry name" value="PRK00010.1"/>
    <property type="match status" value="1"/>
</dbReference>
<dbReference type="PANTHER" id="PTHR11994">
    <property type="entry name" value="60S RIBOSOMAL PROTEIN L11-RELATED"/>
    <property type="match status" value="1"/>
</dbReference>
<dbReference type="Pfam" id="PF00281">
    <property type="entry name" value="Ribosomal_L5"/>
    <property type="match status" value="1"/>
</dbReference>
<dbReference type="Pfam" id="PF00673">
    <property type="entry name" value="Ribosomal_L5_C"/>
    <property type="match status" value="1"/>
</dbReference>
<dbReference type="PIRSF" id="PIRSF002161">
    <property type="entry name" value="Ribosomal_L5"/>
    <property type="match status" value="1"/>
</dbReference>
<dbReference type="SUPFAM" id="SSF55282">
    <property type="entry name" value="RL5-like"/>
    <property type="match status" value="1"/>
</dbReference>
<dbReference type="PROSITE" id="PS00358">
    <property type="entry name" value="RIBOSOMAL_L5"/>
    <property type="match status" value="1"/>
</dbReference>
<keyword id="KW-1185">Reference proteome</keyword>
<keyword id="KW-0687">Ribonucleoprotein</keyword>
<keyword id="KW-0689">Ribosomal protein</keyword>
<keyword id="KW-0694">RNA-binding</keyword>
<keyword id="KW-0699">rRNA-binding</keyword>
<keyword id="KW-0820">tRNA-binding</keyword>
<proteinExistence type="inferred from homology"/>
<organism>
    <name type="scientific">Maridesulfovibrio salexigens (strain ATCC 14822 / DSM 2638 / NCIMB 8403 / VKM B-1763)</name>
    <name type="common">Desulfovibrio salexigens</name>
    <dbReference type="NCBI Taxonomy" id="526222"/>
    <lineage>
        <taxon>Bacteria</taxon>
        <taxon>Pseudomonadati</taxon>
        <taxon>Thermodesulfobacteriota</taxon>
        <taxon>Desulfovibrionia</taxon>
        <taxon>Desulfovibrionales</taxon>
        <taxon>Desulfovibrionaceae</taxon>
        <taxon>Maridesulfovibrio</taxon>
    </lineage>
</organism>
<accession>C6C197</accession>
<evidence type="ECO:0000255" key="1">
    <source>
        <dbReference type="HAMAP-Rule" id="MF_01333"/>
    </source>
</evidence>
<evidence type="ECO:0000305" key="2"/>
<gene>
    <name evidence="1" type="primary">rplE</name>
    <name type="ordered locus">Desal_1197</name>
</gene>
<feature type="chain" id="PRO_1000214623" description="Large ribosomal subunit protein uL5">
    <location>
        <begin position="1"/>
        <end position="179"/>
    </location>
</feature>
<protein>
    <recommendedName>
        <fullName evidence="1">Large ribosomal subunit protein uL5</fullName>
    </recommendedName>
    <alternativeName>
        <fullName evidence="2">50S ribosomal protein L5</fullName>
    </alternativeName>
</protein>
<reference key="1">
    <citation type="submission" date="2009-06" db="EMBL/GenBank/DDBJ databases">
        <title>Complete sequence of Desulfovibrio salexigens DSM 2638.</title>
        <authorList>
            <consortium name="US DOE Joint Genome Institute"/>
            <person name="Lucas S."/>
            <person name="Copeland A."/>
            <person name="Lapidus A."/>
            <person name="Glavina del Rio T."/>
            <person name="Tice H."/>
            <person name="Bruce D."/>
            <person name="Goodwin L."/>
            <person name="Pitluck S."/>
            <person name="Munk A.C."/>
            <person name="Brettin T."/>
            <person name="Detter J.C."/>
            <person name="Han C."/>
            <person name="Tapia R."/>
            <person name="Larimer F."/>
            <person name="Land M."/>
            <person name="Hauser L."/>
            <person name="Kyrpides N."/>
            <person name="Anderson I."/>
            <person name="Wall J.D."/>
            <person name="Arkin A.P."/>
            <person name="Dehal P."/>
            <person name="Chivian D."/>
            <person name="Giles B."/>
            <person name="Hazen T.C."/>
        </authorList>
    </citation>
    <scope>NUCLEOTIDE SEQUENCE [LARGE SCALE GENOMIC DNA]</scope>
    <source>
        <strain>ATCC 14822 / DSM 2638 / NCIMB 8403 / VKM B-1763</strain>
    </source>
</reference>